<protein>
    <recommendedName>
        <fullName>Succinate dehydrogenase cytochrome b560 subunit, mitochondrial</fullName>
    </recommendedName>
    <alternativeName>
        <fullName>Integral membrane protein CII-3</fullName>
    </alternativeName>
    <alternativeName>
        <fullName>Malate dehydrogenase [quinone] cytochrome b560 subunit</fullName>
    </alternativeName>
    <alternativeName>
        <fullName>QPs-1</fullName>
        <shortName>QPs1</shortName>
    </alternativeName>
</protein>
<accession>Q9CZB0</accession>
<accession>Q544Q9</accession>
<accession>Q99JP2</accession>
<accession>Q9DCU7</accession>
<organism>
    <name type="scientific">Mus musculus</name>
    <name type="common">Mouse</name>
    <dbReference type="NCBI Taxonomy" id="10090"/>
    <lineage>
        <taxon>Eukaryota</taxon>
        <taxon>Metazoa</taxon>
        <taxon>Chordata</taxon>
        <taxon>Craniata</taxon>
        <taxon>Vertebrata</taxon>
        <taxon>Euteleostomi</taxon>
        <taxon>Mammalia</taxon>
        <taxon>Eutheria</taxon>
        <taxon>Euarchontoglires</taxon>
        <taxon>Glires</taxon>
        <taxon>Rodentia</taxon>
        <taxon>Myomorpha</taxon>
        <taxon>Muroidea</taxon>
        <taxon>Muridae</taxon>
        <taxon>Murinae</taxon>
        <taxon>Mus</taxon>
        <taxon>Mus</taxon>
    </lineage>
</organism>
<sequence length="169" mass="18382">MAAFLLRHVSRHCLRAHLNAQLCIRNAAPLGTTAKEEMERFWKKNTSSNRPLSPHLTIYKWSLPMALSVCHRGSGIALSGGVSLFGLSALLLPGNFESYLMFVKSLCLGPTLIYSAKFVLVFPLMYHSLNGIRHLLWDLGKGLAIPQVWLSGVAVVVLAVLSSGGLAAL</sequence>
<keyword id="KW-0249">Electron transport</keyword>
<keyword id="KW-0349">Heme</keyword>
<keyword id="KW-0408">Iron</keyword>
<keyword id="KW-0472">Membrane</keyword>
<keyword id="KW-0479">Metal-binding</keyword>
<keyword id="KW-0496">Mitochondrion</keyword>
<keyword id="KW-0999">Mitochondrion inner membrane</keyword>
<keyword id="KW-1185">Reference proteome</keyword>
<keyword id="KW-0809">Transit peptide</keyword>
<keyword id="KW-0812">Transmembrane</keyword>
<keyword id="KW-1133">Transmembrane helix</keyword>
<keyword id="KW-0813">Transport</keyword>
<keyword id="KW-0816">Tricarboxylic acid cycle</keyword>
<name>C560_MOUSE</name>
<gene>
    <name type="primary">Sdhc</name>
</gene>
<reference key="1">
    <citation type="journal article" date="2005" name="Science">
        <title>The transcriptional landscape of the mammalian genome.</title>
        <authorList>
            <person name="Carninci P."/>
            <person name="Kasukawa T."/>
            <person name="Katayama S."/>
            <person name="Gough J."/>
            <person name="Frith M.C."/>
            <person name="Maeda N."/>
            <person name="Oyama R."/>
            <person name="Ravasi T."/>
            <person name="Lenhard B."/>
            <person name="Wells C."/>
            <person name="Kodzius R."/>
            <person name="Shimokawa K."/>
            <person name="Bajic V.B."/>
            <person name="Brenner S.E."/>
            <person name="Batalov S."/>
            <person name="Forrest A.R."/>
            <person name="Zavolan M."/>
            <person name="Davis M.J."/>
            <person name="Wilming L.G."/>
            <person name="Aidinis V."/>
            <person name="Allen J.E."/>
            <person name="Ambesi-Impiombato A."/>
            <person name="Apweiler R."/>
            <person name="Aturaliya R.N."/>
            <person name="Bailey T.L."/>
            <person name="Bansal M."/>
            <person name="Baxter L."/>
            <person name="Beisel K.W."/>
            <person name="Bersano T."/>
            <person name="Bono H."/>
            <person name="Chalk A.M."/>
            <person name="Chiu K.P."/>
            <person name="Choudhary V."/>
            <person name="Christoffels A."/>
            <person name="Clutterbuck D.R."/>
            <person name="Crowe M.L."/>
            <person name="Dalla E."/>
            <person name="Dalrymple B.P."/>
            <person name="de Bono B."/>
            <person name="Della Gatta G."/>
            <person name="di Bernardo D."/>
            <person name="Down T."/>
            <person name="Engstrom P."/>
            <person name="Fagiolini M."/>
            <person name="Faulkner G."/>
            <person name="Fletcher C.F."/>
            <person name="Fukushima T."/>
            <person name="Furuno M."/>
            <person name="Futaki S."/>
            <person name="Gariboldi M."/>
            <person name="Georgii-Hemming P."/>
            <person name="Gingeras T.R."/>
            <person name="Gojobori T."/>
            <person name="Green R.E."/>
            <person name="Gustincich S."/>
            <person name="Harbers M."/>
            <person name="Hayashi Y."/>
            <person name="Hensch T.K."/>
            <person name="Hirokawa N."/>
            <person name="Hill D."/>
            <person name="Huminiecki L."/>
            <person name="Iacono M."/>
            <person name="Ikeo K."/>
            <person name="Iwama A."/>
            <person name="Ishikawa T."/>
            <person name="Jakt M."/>
            <person name="Kanapin A."/>
            <person name="Katoh M."/>
            <person name="Kawasawa Y."/>
            <person name="Kelso J."/>
            <person name="Kitamura H."/>
            <person name="Kitano H."/>
            <person name="Kollias G."/>
            <person name="Krishnan S.P."/>
            <person name="Kruger A."/>
            <person name="Kummerfeld S.K."/>
            <person name="Kurochkin I.V."/>
            <person name="Lareau L.F."/>
            <person name="Lazarevic D."/>
            <person name="Lipovich L."/>
            <person name="Liu J."/>
            <person name="Liuni S."/>
            <person name="McWilliam S."/>
            <person name="Madan Babu M."/>
            <person name="Madera M."/>
            <person name="Marchionni L."/>
            <person name="Matsuda H."/>
            <person name="Matsuzawa S."/>
            <person name="Miki H."/>
            <person name="Mignone F."/>
            <person name="Miyake S."/>
            <person name="Morris K."/>
            <person name="Mottagui-Tabar S."/>
            <person name="Mulder N."/>
            <person name="Nakano N."/>
            <person name="Nakauchi H."/>
            <person name="Ng P."/>
            <person name="Nilsson R."/>
            <person name="Nishiguchi S."/>
            <person name="Nishikawa S."/>
            <person name="Nori F."/>
            <person name="Ohara O."/>
            <person name="Okazaki Y."/>
            <person name="Orlando V."/>
            <person name="Pang K.C."/>
            <person name="Pavan W.J."/>
            <person name="Pavesi G."/>
            <person name="Pesole G."/>
            <person name="Petrovsky N."/>
            <person name="Piazza S."/>
            <person name="Reed J."/>
            <person name="Reid J.F."/>
            <person name="Ring B.Z."/>
            <person name="Ringwald M."/>
            <person name="Rost B."/>
            <person name="Ruan Y."/>
            <person name="Salzberg S.L."/>
            <person name="Sandelin A."/>
            <person name="Schneider C."/>
            <person name="Schoenbach C."/>
            <person name="Sekiguchi K."/>
            <person name="Semple C.A."/>
            <person name="Seno S."/>
            <person name="Sessa L."/>
            <person name="Sheng Y."/>
            <person name="Shibata Y."/>
            <person name="Shimada H."/>
            <person name="Shimada K."/>
            <person name="Silva D."/>
            <person name="Sinclair B."/>
            <person name="Sperling S."/>
            <person name="Stupka E."/>
            <person name="Sugiura K."/>
            <person name="Sultana R."/>
            <person name="Takenaka Y."/>
            <person name="Taki K."/>
            <person name="Tammoja K."/>
            <person name="Tan S.L."/>
            <person name="Tang S."/>
            <person name="Taylor M.S."/>
            <person name="Tegner J."/>
            <person name="Teichmann S.A."/>
            <person name="Ueda H.R."/>
            <person name="van Nimwegen E."/>
            <person name="Verardo R."/>
            <person name="Wei C.L."/>
            <person name="Yagi K."/>
            <person name="Yamanishi H."/>
            <person name="Zabarovsky E."/>
            <person name="Zhu S."/>
            <person name="Zimmer A."/>
            <person name="Hide W."/>
            <person name="Bult C."/>
            <person name="Grimmond S.M."/>
            <person name="Teasdale R.D."/>
            <person name="Liu E.T."/>
            <person name="Brusic V."/>
            <person name="Quackenbush J."/>
            <person name="Wahlestedt C."/>
            <person name="Mattick J.S."/>
            <person name="Hume D.A."/>
            <person name="Kai C."/>
            <person name="Sasaki D."/>
            <person name="Tomaru Y."/>
            <person name="Fukuda S."/>
            <person name="Kanamori-Katayama M."/>
            <person name="Suzuki M."/>
            <person name="Aoki J."/>
            <person name="Arakawa T."/>
            <person name="Iida J."/>
            <person name="Imamura K."/>
            <person name="Itoh M."/>
            <person name="Kato T."/>
            <person name="Kawaji H."/>
            <person name="Kawagashira N."/>
            <person name="Kawashima T."/>
            <person name="Kojima M."/>
            <person name="Kondo S."/>
            <person name="Konno H."/>
            <person name="Nakano K."/>
            <person name="Ninomiya N."/>
            <person name="Nishio T."/>
            <person name="Okada M."/>
            <person name="Plessy C."/>
            <person name="Shibata K."/>
            <person name="Shiraki T."/>
            <person name="Suzuki S."/>
            <person name="Tagami M."/>
            <person name="Waki K."/>
            <person name="Watahiki A."/>
            <person name="Okamura-Oho Y."/>
            <person name="Suzuki H."/>
            <person name="Kawai J."/>
            <person name="Hayashizaki Y."/>
        </authorList>
    </citation>
    <scope>NUCLEOTIDE SEQUENCE [LARGE SCALE MRNA]</scope>
    <source>
        <strain>C57BL/6J</strain>
        <tissue>Brain</tissue>
        <tissue>Embryo</tissue>
        <tissue>Kidney</tissue>
        <tissue>Muellerian duct</tissue>
    </source>
</reference>
<reference key="2">
    <citation type="journal article" date="2004" name="Genome Res.">
        <title>The status, quality, and expansion of the NIH full-length cDNA project: the Mammalian Gene Collection (MGC).</title>
        <authorList>
            <consortium name="The MGC Project Team"/>
        </authorList>
    </citation>
    <scope>NUCLEOTIDE SEQUENCE [LARGE SCALE MRNA]</scope>
</reference>
<reference key="3">
    <citation type="journal article" date="2010" name="Cell">
        <title>A tissue-specific atlas of mouse protein phosphorylation and expression.</title>
        <authorList>
            <person name="Huttlin E.L."/>
            <person name="Jedrychowski M.P."/>
            <person name="Elias J.E."/>
            <person name="Goswami T."/>
            <person name="Rad R."/>
            <person name="Beausoleil S.A."/>
            <person name="Villen J."/>
            <person name="Haas W."/>
            <person name="Sowa M.E."/>
            <person name="Gygi S.P."/>
        </authorList>
    </citation>
    <scope>IDENTIFICATION BY MASS SPECTROMETRY [LARGE SCALE ANALYSIS]</scope>
    <source>
        <tissue>Brain</tissue>
        <tissue>Brown adipose tissue</tissue>
        <tissue>Heart</tissue>
        <tissue>Kidney</tissue>
        <tissue>Liver</tissue>
        <tissue>Lung</tissue>
        <tissue>Pancreas</tissue>
        <tissue>Spleen</tissue>
        <tissue>Testis</tissue>
    </source>
</reference>
<evidence type="ECO:0000250" key="1">
    <source>
        <dbReference type="UniProtKB" id="D0VWV4"/>
    </source>
</evidence>
<evidence type="ECO:0000250" key="2">
    <source>
        <dbReference type="UniProtKB" id="P35720"/>
    </source>
</evidence>
<evidence type="ECO:0000250" key="3">
    <source>
        <dbReference type="UniProtKB" id="Q99643"/>
    </source>
</evidence>
<evidence type="ECO:0000305" key="4"/>
<feature type="transit peptide" description="Mitochondrion" evidence="2">
    <location>
        <begin position="1"/>
        <end position="29"/>
    </location>
</feature>
<feature type="chain" id="PRO_0000003635" description="Succinate dehydrogenase cytochrome b560 subunit, mitochondrial">
    <location>
        <begin position="30"/>
        <end position="169"/>
    </location>
</feature>
<feature type="topological domain" description="Mitochondrial matrix" evidence="1">
    <location>
        <begin position="30"/>
        <end position="62"/>
    </location>
</feature>
<feature type="transmembrane region" description="Helical" evidence="1">
    <location>
        <begin position="63"/>
        <end position="92"/>
    </location>
</feature>
<feature type="topological domain" description="Mitochondrial intermembrane" evidence="1">
    <location>
        <begin position="93"/>
        <end position="112"/>
    </location>
</feature>
<feature type="transmembrane region" description="Helical" evidence="1">
    <location>
        <begin position="113"/>
        <end position="137"/>
    </location>
</feature>
<feature type="topological domain" description="Mitochondrial matrix" evidence="1">
    <location>
        <begin position="138"/>
        <end position="144"/>
    </location>
</feature>
<feature type="transmembrane region" description="Helical" evidence="1">
    <location>
        <begin position="145"/>
        <end position="166"/>
    </location>
</feature>
<feature type="topological domain" description="Mitochondrial intermembrane" evidence="1">
    <location>
        <begin position="167"/>
        <end position="169"/>
    </location>
</feature>
<feature type="binding site" description="axial binding residue" evidence="1">
    <location>
        <position position="127"/>
    </location>
    <ligand>
        <name>heme b</name>
        <dbReference type="ChEBI" id="CHEBI:60344"/>
        <note>ligand shared with SDHD</note>
    </ligand>
    <ligandPart>
        <name>Fe</name>
        <dbReference type="ChEBI" id="CHEBI:18248"/>
    </ligandPart>
</feature>
<feature type="sequence conflict" description="In Ref. 2; AAH05779." evidence="4" ref="2">
    <original>F</original>
    <variation>L</variation>
    <location>
        <position position="4"/>
    </location>
</feature>
<feature type="sequence conflict" description="In Ref. 2; AAH05779." evidence="4" ref="2">
    <original>S</original>
    <variation>G</variation>
    <location>
        <position position="10"/>
    </location>
</feature>
<feature type="sequence conflict" description="In Ref. 1; BAB22116." evidence="4" ref="1">
    <original>L</original>
    <variation>R</variation>
    <location>
        <position position="22"/>
    </location>
</feature>
<feature type="sequence conflict" description="In Ref. 2; AAH05779." evidence="4" ref="2">
    <original>L</original>
    <variation>V</variation>
    <location>
        <position position="91"/>
    </location>
</feature>
<proteinExistence type="evidence at protein level"/>
<dbReference type="EMBL" id="AK002459">
    <property type="protein sequence ID" value="BAB22116.1"/>
    <property type="molecule type" value="mRNA"/>
</dbReference>
<dbReference type="EMBL" id="AK012818">
    <property type="protein sequence ID" value="BAB28491.1"/>
    <property type="molecule type" value="mRNA"/>
</dbReference>
<dbReference type="EMBL" id="AK032458">
    <property type="protein sequence ID" value="BAC27878.1"/>
    <property type="molecule type" value="mRNA"/>
</dbReference>
<dbReference type="EMBL" id="AK135503">
    <property type="protein sequence ID" value="BAE22557.1"/>
    <property type="molecule type" value="mRNA"/>
</dbReference>
<dbReference type="EMBL" id="BC005779">
    <property type="protein sequence ID" value="AAH05779.1"/>
    <property type="molecule type" value="mRNA"/>
</dbReference>
<dbReference type="CCDS" id="CCDS35772.1"/>
<dbReference type="RefSeq" id="NP_079597.2">
    <property type="nucleotide sequence ID" value="NM_025321.3"/>
</dbReference>
<dbReference type="SMR" id="Q9CZB0"/>
<dbReference type="BioGRID" id="211179">
    <property type="interactions" value="3"/>
</dbReference>
<dbReference type="ComplexPortal" id="CPX-562">
    <property type="entry name" value="Mitochondrial respiratory chain complex II"/>
</dbReference>
<dbReference type="CORUM" id="Q9CZB0"/>
<dbReference type="FunCoup" id="Q9CZB0">
    <property type="interactions" value="1541"/>
</dbReference>
<dbReference type="IntAct" id="Q9CZB0">
    <property type="interactions" value="3"/>
</dbReference>
<dbReference type="STRING" id="10090.ENSMUSP00000106968"/>
<dbReference type="GlyGen" id="Q9CZB0">
    <property type="glycosylation" value="2 sites, 1 N-linked glycan (1 site), 1 O-linked glycan (1 site)"/>
</dbReference>
<dbReference type="iPTMnet" id="Q9CZB0"/>
<dbReference type="PhosphoSitePlus" id="Q9CZB0"/>
<dbReference type="SwissPalm" id="Q9CZB0"/>
<dbReference type="jPOST" id="Q9CZB0"/>
<dbReference type="PaxDb" id="10090-ENSMUSP00000106968"/>
<dbReference type="PeptideAtlas" id="Q9CZB0"/>
<dbReference type="ProteomicsDB" id="281718"/>
<dbReference type="Pumba" id="Q9CZB0"/>
<dbReference type="Antibodypedia" id="34309">
    <property type="antibodies" value="185 antibodies from 25 providers"/>
</dbReference>
<dbReference type="DNASU" id="66052"/>
<dbReference type="Ensembl" id="ENSMUST00000111336.10">
    <property type="protein sequence ID" value="ENSMUSP00000106968.4"/>
    <property type="gene ID" value="ENSMUSG00000058076.13"/>
</dbReference>
<dbReference type="GeneID" id="66052"/>
<dbReference type="KEGG" id="mmu:66052"/>
<dbReference type="UCSC" id="uc007dnb.2">
    <property type="organism name" value="mouse"/>
</dbReference>
<dbReference type="AGR" id="MGI:1913302"/>
<dbReference type="CTD" id="6391"/>
<dbReference type="MGI" id="MGI:1913302">
    <property type="gene designation" value="Sdhc"/>
</dbReference>
<dbReference type="VEuPathDB" id="HostDB:ENSMUSG00000058076"/>
<dbReference type="eggNOG" id="KOG0449">
    <property type="taxonomic scope" value="Eukaryota"/>
</dbReference>
<dbReference type="GeneTree" id="ENSGT00390000000566"/>
<dbReference type="HOGENOM" id="CLU_094691_1_1_1"/>
<dbReference type="InParanoid" id="Q9CZB0"/>
<dbReference type="OMA" id="MNGIRHL"/>
<dbReference type="OrthoDB" id="588261at2759"/>
<dbReference type="PhylomeDB" id="Q9CZB0"/>
<dbReference type="TreeFam" id="TF313317"/>
<dbReference type="Reactome" id="R-MMU-71403">
    <property type="pathway name" value="Citric acid cycle (TCA cycle)"/>
</dbReference>
<dbReference type="Reactome" id="R-MMU-9854311">
    <property type="pathway name" value="Maturation of TCA enzymes and regulation of TCA cycle"/>
</dbReference>
<dbReference type="UniPathway" id="UPA00223"/>
<dbReference type="BioGRID-ORCS" id="66052">
    <property type="hits" value="21 hits in 80 CRISPR screens"/>
</dbReference>
<dbReference type="ChiTaRS" id="Sdhc">
    <property type="organism name" value="mouse"/>
</dbReference>
<dbReference type="PRO" id="PR:Q9CZB0"/>
<dbReference type="Proteomes" id="UP000000589">
    <property type="component" value="Chromosome 1"/>
</dbReference>
<dbReference type="RNAct" id="Q9CZB0">
    <property type="molecule type" value="protein"/>
</dbReference>
<dbReference type="Bgee" id="ENSMUSG00000058076">
    <property type="expression patterns" value="Expressed in soleus muscle and 274 other cell types or tissues"/>
</dbReference>
<dbReference type="ExpressionAtlas" id="Q9CZB0">
    <property type="expression patterns" value="baseline and differential"/>
</dbReference>
<dbReference type="GO" id="GO:0005743">
    <property type="term" value="C:mitochondrial inner membrane"/>
    <property type="evidence" value="ECO:0000250"/>
    <property type="project" value="UniProtKB"/>
</dbReference>
<dbReference type="GO" id="GO:0005739">
    <property type="term" value="C:mitochondrion"/>
    <property type="evidence" value="ECO:0000314"/>
    <property type="project" value="MGI"/>
</dbReference>
<dbReference type="GO" id="GO:0045273">
    <property type="term" value="C:respiratory chain complex II (succinate dehydrogenase)"/>
    <property type="evidence" value="ECO:0000250"/>
    <property type="project" value="UniProtKB"/>
</dbReference>
<dbReference type="GO" id="GO:0009055">
    <property type="term" value="F:electron transfer activity"/>
    <property type="evidence" value="ECO:0007669"/>
    <property type="project" value="InterPro"/>
</dbReference>
<dbReference type="GO" id="GO:0020037">
    <property type="term" value="F:heme binding"/>
    <property type="evidence" value="ECO:0000250"/>
    <property type="project" value="UniProtKB"/>
</dbReference>
<dbReference type="GO" id="GO:0046872">
    <property type="term" value="F:metal ion binding"/>
    <property type="evidence" value="ECO:0007669"/>
    <property type="project" value="UniProtKB-KW"/>
</dbReference>
<dbReference type="GO" id="GO:0006121">
    <property type="term" value="P:mitochondrial electron transport, succinate to ubiquinone"/>
    <property type="evidence" value="ECO:0000303"/>
    <property type="project" value="ComplexPortal"/>
</dbReference>
<dbReference type="GO" id="GO:0042776">
    <property type="term" value="P:proton motive force-driven mitochondrial ATP synthesis"/>
    <property type="evidence" value="ECO:0000303"/>
    <property type="project" value="ComplexPortal"/>
</dbReference>
<dbReference type="GO" id="GO:0006099">
    <property type="term" value="P:tricarboxylic acid cycle"/>
    <property type="evidence" value="ECO:0000303"/>
    <property type="project" value="ComplexPortal"/>
</dbReference>
<dbReference type="CDD" id="cd03499">
    <property type="entry name" value="SQR_TypeC_SdhC"/>
    <property type="match status" value="1"/>
</dbReference>
<dbReference type="FunFam" id="1.20.1300.10:FF:000006">
    <property type="entry name" value="Succinate dehydrogenase cytochrome b560 subunit, mitochondrial"/>
    <property type="match status" value="1"/>
</dbReference>
<dbReference type="FunFam" id="1.20.5.540:FF:000002">
    <property type="entry name" value="Succinate dehydrogenase cytochrome b560 subunit, mitochondrial"/>
    <property type="match status" value="1"/>
</dbReference>
<dbReference type="Gene3D" id="1.20.1300.10">
    <property type="entry name" value="Fumarate reductase/succinate dehydrogenase, transmembrane subunit"/>
    <property type="match status" value="1"/>
</dbReference>
<dbReference type="Gene3D" id="1.20.5.540">
    <property type="entry name" value="Single helix bin"/>
    <property type="match status" value="1"/>
</dbReference>
<dbReference type="InterPro" id="IPR034804">
    <property type="entry name" value="SQR/QFR_C/D"/>
</dbReference>
<dbReference type="InterPro" id="IPR018495">
    <property type="entry name" value="Succ_DH_cyt_bsu_CS"/>
</dbReference>
<dbReference type="InterPro" id="IPR014314">
    <property type="entry name" value="Succ_DH_cytb556"/>
</dbReference>
<dbReference type="InterPro" id="IPR000701">
    <property type="entry name" value="SuccDH_FuR_B_TM-su"/>
</dbReference>
<dbReference type="NCBIfam" id="TIGR02970">
    <property type="entry name" value="succ_dehyd_cytB"/>
    <property type="match status" value="1"/>
</dbReference>
<dbReference type="PANTHER" id="PTHR10978">
    <property type="entry name" value="SUCCINATE DEHYDROGENASE CYTOCHROME B560 SUBUNIT"/>
    <property type="match status" value="1"/>
</dbReference>
<dbReference type="PANTHER" id="PTHR10978:SF5">
    <property type="entry name" value="SUCCINATE DEHYDROGENASE CYTOCHROME B560 SUBUNIT, MITOCHONDRIAL"/>
    <property type="match status" value="1"/>
</dbReference>
<dbReference type="Pfam" id="PF01127">
    <property type="entry name" value="Sdh_cyt"/>
    <property type="match status" value="1"/>
</dbReference>
<dbReference type="SUPFAM" id="SSF81343">
    <property type="entry name" value="Fumarate reductase respiratory complex transmembrane subunits"/>
    <property type="match status" value="1"/>
</dbReference>
<dbReference type="PROSITE" id="PS01000">
    <property type="entry name" value="SDH_CYT_1"/>
    <property type="match status" value="1"/>
</dbReference>
<dbReference type="PROSITE" id="PS01001">
    <property type="entry name" value="SDH_CYT_2"/>
    <property type="match status" value="1"/>
</dbReference>
<comment type="function">
    <text evidence="2 3">Membrane-anchoring subunit of succinate dehydrogenase (SDH) that is involved in complex II of the mitochondrial electron transport chain and is responsible for transferring electrons from succinate to ubiquinone (coenzyme Q) (By similarity). SDH also oxidizes malate to the non-canonical enol form of oxaloacetate, enol-oxaloacetate. Enol-oxaloacetate, which is a potent inhibitor of the succinate dehydrogenase activity, is further isomerized into keto-oxaloacetate (By similarity).</text>
</comment>
<comment type="cofactor">
    <cofactor evidence="3">
        <name>heme b</name>
        <dbReference type="ChEBI" id="CHEBI:60344"/>
    </cofactor>
    <text evidence="3">The heme b is bound between the two transmembrane subunits SDHC and SDHD.</text>
</comment>
<comment type="pathway">
    <text evidence="3">Carbohydrate metabolism; tricarboxylic acid cycle.</text>
</comment>
<comment type="subunit">
    <text evidence="3">Component of complex II composed of four subunits: the flavoprotein (FP) SDHA, iron-sulfur protein (IP) SDHB, and a cytochrome b560 composed of SDHC and SDHD.</text>
</comment>
<comment type="subcellular location">
    <subcellularLocation>
        <location evidence="3">Mitochondrion inner membrane</location>
        <topology evidence="3">Multi-pass membrane protein</topology>
    </subcellularLocation>
</comment>
<comment type="similarity">
    <text evidence="4">Belongs to the cytochrome b560 family.</text>
</comment>